<proteinExistence type="inferred from homology"/>
<dbReference type="EC" id="1.-.-.-" evidence="6"/>
<dbReference type="EMBL" id="AB725916">
    <property type="protein sequence ID" value="BAM84045.1"/>
    <property type="molecule type" value="Genomic_DNA"/>
</dbReference>
<dbReference type="SMR" id="M1V8J8"/>
<dbReference type="GO" id="GO:0016020">
    <property type="term" value="C:membrane"/>
    <property type="evidence" value="ECO:0007669"/>
    <property type="project" value="UniProtKB-SubCell"/>
</dbReference>
<dbReference type="GO" id="GO:0020037">
    <property type="term" value="F:heme binding"/>
    <property type="evidence" value="ECO:0007669"/>
    <property type="project" value="InterPro"/>
</dbReference>
<dbReference type="GO" id="GO:0005506">
    <property type="term" value="F:iron ion binding"/>
    <property type="evidence" value="ECO:0007669"/>
    <property type="project" value="InterPro"/>
</dbReference>
<dbReference type="GO" id="GO:0004497">
    <property type="term" value="F:monooxygenase activity"/>
    <property type="evidence" value="ECO:0007669"/>
    <property type="project" value="UniProtKB-KW"/>
</dbReference>
<dbReference type="GO" id="GO:0016705">
    <property type="term" value="F:oxidoreductase activity, acting on paired donors, with incorporation or reduction of molecular oxygen"/>
    <property type="evidence" value="ECO:0007669"/>
    <property type="project" value="InterPro"/>
</dbReference>
<dbReference type="GO" id="GO:0019748">
    <property type="term" value="P:secondary metabolic process"/>
    <property type="evidence" value="ECO:0007669"/>
    <property type="project" value="UniProtKB-ARBA"/>
</dbReference>
<dbReference type="CDD" id="cd11041">
    <property type="entry name" value="CYP503A1-like"/>
    <property type="match status" value="1"/>
</dbReference>
<dbReference type="Gene3D" id="1.10.630.10">
    <property type="entry name" value="Cytochrome P450"/>
    <property type="match status" value="1"/>
</dbReference>
<dbReference type="InterPro" id="IPR001128">
    <property type="entry name" value="Cyt_P450"/>
</dbReference>
<dbReference type="InterPro" id="IPR002401">
    <property type="entry name" value="Cyt_P450_E_grp-I"/>
</dbReference>
<dbReference type="InterPro" id="IPR036396">
    <property type="entry name" value="Cyt_P450_sf"/>
</dbReference>
<dbReference type="PANTHER" id="PTHR46206">
    <property type="entry name" value="CYTOCHROME P450"/>
    <property type="match status" value="1"/>
</dbReference>
<dbReference type="PANTHER" id="PTHR46206:SF6">
    <property type="entry name" value="CYTOCHROME P450 MONOOXYGENASE AN1598-RELATED"/>
    <property type="match status" value="1"/>
</dbReference>
<dbReference type="Pfam" id="PF00067">
    <property type="entry name" value="p450"/>
    <property type="match status" value="1"/>
</dbReference>
<dbReference type="PRINTS" id="PR00463">
    <property type="entry name" value="EP450I"/>
</dbReference>
<dbReference type="SUPFAM" id="SSF48264">
    <property type="entry name" value="Cytochrome P450"/>
    <property type="match status" value="1"/>
</dbReference>
<sequence length="526" mass="59027">MNDYNVTGTTLGDAFAKLPPNWGQLTGALLFLAACTWIYLPAFDGVPAPFAGYRSPLEPAIVAKTRYAFAASDIISEGYAKWKSSMYKISRHGGDVVVLSRKYIDELQNAPHERLSSIKGLIKNFGGQYSGIDLLDESDIGTRALQTKITPNLTKFSDDMRDELEYALGRDMPDCEDWTLVPLQPILLKLLGRITSRVLIGLPICRDEKWLDAASQHAHNVTITQIVMKAVHPIFRPFLNLVLPTVWRYKSAVRRGKAILAPEVQRRRNLEDNDPDYVKPNDLLQAMMDLSTPGGKDSQPEDLAHRHLLITLVAGHSTAAAGSHALMDLVSRPQLLEELRDEVLQVLQENGGNWGKQSLSKLWKMDSFFRESQRQNPPSLLGFHRIVQDPAGITLHDGVHVPYGTHLCIAPHSVSSDPAVIPNPDVFDGLRYYEQRRQKPDESMKHQHATADKNHLHFGYGTWSCPGRFLASDELKMTLSALLLRYDFKYPDGSSRPTNKHIDEFPYVDPETPLLMRRRHQGGTGV</sequence>
<organism>
    <name type="scientific">Tolypocladium album</name>
    <name type="common">Soil fungus</name>
    <name type="synonym">Chaunopycnis alba</name>
    <dbReference type="NCBI Taxonomy" id="124418"/>
    <lineage>
        <taxon>Eukaryota</taxon>
        <taxon>Fungi</taxon>
        <taxon>Dikarya</taxon>
        <taxon>Ascomycota</taxon>
        <taxon>Pezizomycotina</taxon>
        <taxon>Sordariomycetes</taxon>
        <taxon>Hypocreomycetidae</taxon>
        <taxon>Hypocreales</taxon>
        <taxon>Ophiocordycipitaceae</taxon>
        <taxon>Tolypocladium</taxon>
    </lineage>
</organism>
<name>TERK_TOLAL</name>
<protein>
    <recommendedName>
        <fullName evidence="4">Cytochrome P450 monooxygeanse terK</fullName>
        <ecNumber evidence="6">1.-.-.-</ecNumber>
    </recommendedName>
    <alternativeName>
        <fullName evidence="4">Terpendoles biosynthesis cluster protein K</fullName>
    </alternativeName>
</protein>
<feature type="chain" id="PRO_0000460265" description="Cytochrome P450 monooxygeanse terK">
    <location>
        <begin position="1"/>
        <end position="526"/>
    </location>
</feature>
<feature type="transmembrane region" description="Helical" evidence="2">
    <location>
        <begin position="21"/>
        <end position="43"/>
    </location>
</feature>
<feature type="binding site" description="axial binding residue" evidence="1">
    <location>
        <position position="465"/>
    </location>
    <ligand>
        <name>heme</name>
        <dbReference type="ChEBI" id="CHEBI:30413"/>
    </ligand>
    <ligandPart>
        <name>Fe</name>
        <dbReference type="ChEBI" id="CHEBI:18248"/>
    </ligandPart>
</feature>
<reference key="1">
    <citation type="journal article" date="2012" name="Chem. Biol.">
        <title>Terpendole E, a kinesin Eg5 inhibitor, is a key biosynthetic intermediate of indole-diterpenes in the producing fungus Chaunopycnis alba.</title>
        <authorList>
            <person name="Motoyama T."/>
            <person name="Hayashi T."/>
            <person name="Hirota H."/>
            <person name="Ueki M."/>
            <person name="Osada H."/>
        </authorList>
    </citation>
    <scope>NUCLEOTIDE SEQUENCE [GENOMIC DNA]</scope>
    <scope>FUNCTION</scope>
    <scope>DISRUPTION PHENOTYPE</scope>
    <scope>PATHWAY</scope>
    <source>
        <strain>RK99-F33</strain>
    </source>
</reference>
<keyword id="KW-0349">Heme</keyword>
<keyword id="KW-0408">Iron</keyword>
<keyword id="KW-0472">Membrane</keyword>
<keyword id="KW-0479">Metal-binding</keyword>
<keyword id="KW-0503">Monooxygenase</keyword>
<keyword id="KW-0560">Oxidoreductase</keyword>
<keyword id="KW-0812">Transmembrane</keyword>
<keyword id="KW-1133">Transmembrane helix</keyword>
<gene>
    <name evidence="4" type="primary">terK</name>
</gene>
<evidence type="ECO:0000250" key="1">
    <source>
        <dbReference type="UniProtKB" id="P04798"/>
    </source>
</evidence>
<evidence type="ECO:0000255" key="2"/>
<evidence type="ECO:0000269" key="3">
    <source>
    </source>
</evidence>
<evidence type="ECO:0000303" key="4">
    <source>
    </source>
</evidence>
<evidence type="ECO:0000305" key="5"/>
<evidence type="ECO:0000305" key="6">
    <source>
    </source>
</evidence>
<accession>M1V8J8</accession>
<comment type="function">
    <text evidence="3 6">Cytochrome P450 monooxygeanse; part of the gene cluster that mediates the biosynthesis of terpendoles, indole-diterpene (IDT) mycotoxins including terpendole I, terpendole K, terpendole C, as well as the kinesin Eg5 inhibitor terpendole E (PubMed:23261604). Terpendoles biosynthesis begins with the synthesis of geranylgeranyl diphosphate (GGPP) by a yet unidentified GGPP synthase. Condensation of indole-3-glycerol phosphate with GGPP by the prenyltransferase terC then forms 3-geranylgeranylindole (3-GGI), followed by epoxidation and cyclization of this intermediate (by the FAD-dependent monooxygeanse terM and the terpene cyclase terB) to form paspaline. The cytochrome monooxygenase terQ then hydroxylates paspalline at C-11 to yield terpendole E. The cytochrome monooxygenase terP converts terpendole E to 13-desoxyterpendole I, and terQ converts 13-desoxyterpendole I into terpendole I. TerF and terK are required for conversion of terpendole I to terpendole C which is further converted to terpendole K (Probable).</text>
</comment>
<comment type="cofactor">
    <cofactor evidence="1">
        <name>heme</name>
        <dbReference type="ChEBI" id="CHEBI:30413"/>
    </cofactor>
</comment>
<comment type="pathway">
    <text evidence="3">Secondary metabolite biosynthesis.</text>
</comment>
<comment type="subcellular location">
    <subcellularLocation>
        <location evidence="2">Membrane</location>
        <topology evidence="2">Single-pass membrane protein</topology>
    </subcellularLocation>
</comment>
<comment type="disruption phenotype">
    <text evidence="3">The disruption of the whole terpendoles biosynthesis cluster abolishes the terpendoles production.</text>
</comment>
<comment type="similarity">
    <text evidence="5">Belongs to the cytochrome P450 family.</text>
</comment>